<name>C79D2_MANES</name>
<sequence length="541" mass="61293">MAMNVSTTATTTASFASTSSMNNTAKILLITLFISIVSTVIKLQKRASYKKASKNFPLPPGPTPWPLIGNIPEMIRYRPTFRWIHQLMKDMNTDICLIRFGKTNVVPISCPVIAREILKKHDAVFSNRPKILCAKTMSGGYLTTIVVPYNDQWKKMRKVLTSEIISPARHKWLHDKRAEEADQLVFYINNQYKSNKNVNVRIAARHYGGNVIRKMMFSKRYFGKGMPDGGPGPEEIMHVDAIFTALKYLYGFCISDYLPFLEGLDLDGQEKIVLNANKTIRDLQNPLIEERIQQWRSGERKEMEDLLDVFITLQDSDGKPLLNPDEIKNQIAEIMIATIDNPANAVEWAMGELINQPELLAKATEELDRVVGKDRLVQESDIPNLNYVKACAREAFRLHPVAYFNVPHVAMEDAVIGDYFIPKGSWAILSRYGLGRNPKTWPDPLKYDPERHLNEGEVVLTEHDLRFVTFSTGRRGCVAALLGTTMITMMLARMLQCFTWTPPPNVTRIDLSENIDELTPATPITGFAKPRLAPHLYPTSP</sequence>
<reference key="1">
    <citation type="journal article" date="2000" name="J. Biol. Chem.">
        <title>Cytochromes P-450 from cassava (Manihot esculenta Crantz) catalyzing the first steps in the biosynthesis of the cyanogenic glucosides linamarin and lotaustralin. Cloning, functional expression in Pichia pastoris, and substrate specificity of the isolated recombinant enzymes.</title>
        <authorList>
            <person name="Andersen M.D."/>
            <person name="Busk P.K."/>
            <person name="Svendsen I."/>
            <person name="Moller B.L."/>
        </authorList>
    </citation>
    <scope>NUCLEOTIDE SEQUENCE [MRNA]</scope>
    <scope>FUNCTION</scope>
    <scope>CATALYTIC ACTIVITY</scope>
    <scope>SUBCELLULAR LOCATION</scope>
</reference>
<reference key="2">
    <citation type="journal article" date="2005" name="Plant Physiol.">
        <title>Cassava plants with a depleted cyanogenic glucoside content in leaves and tubers. Distribution of cyanogenic glucosides, their site of synthesis and transport, and blockage of the biosynthesis by RNA interference technology.</title>
        <authorList>
            <person name="Jorgensen K."/>
            <person name="Bak S."/>
            <person name="Busk P.K."/>
            <person name="Sorensen C."/>
            <person name="Olsen C.E."/>
            <person name="Puonti-Kaerlas J."/>
            <person name="Moller B.L."/>
        </authorList>
    </citation>
    <scope>NUCLEOTIDE SEQUENCE [MRNA]</scope>
    <scope>TISSUE SPECIFICITY</scope>
</reference>
<reference key="3">
    <citation type="journal article" date="2004" name="Plant Mol. Biol.">
        <title>Engineering cyanogen synthesis and turnover in cassava (Manihot esculenta).</title>
        <authorList>
            <person name="Siritunga D."/>
            <person name="Sayre R."/>
        </authorList>
    </citation>
    <scope>FUNCTION</scope>
</reference>
<reference key="4">
    <citation type="journal article" date="2004" name="Plant Physiol.">
        <title>Biosynthesis of the nitrile glucosides rhodiocyanoside A and D and the cyanogenic glucosides lotaustralin and linamarin in Lotus japonicus.</title>
        <authorList>
            <person name="Forslund K."/>
            <person name="Morant M."/>
            <person name="Jorgensen B."/>
            <person name="Olsen C.E."/>
            <person name="Asamizu E."/>
            <person name="Sato S."/>
            <person name="Tabata S."/>
            <person name="Bak S."/>
        </authorList>
    </citation>
    <scope>FUNCTION</scope>
</reference>
<proteinExistence type="evidence at protein level"/>
<protein>
    <recommendedName>
        <fullName evidence="9">Valine N-monooxygenase 2</fullName>
        <ecNumber evidence="5">1.14.14.38</ecNumber>
    </recommendedName>
    <alternativeName>
        <fullName evidence="9">Cytochrome P450 79D2</fullName>
    </alternativeName>
    <alternativeName>
        <fullName evidence="9">Isoleucine N-monooxygenase 2</fullName>
        <ecNumber evidence="5">1.14.14.39</ecNumber>
    </alternativeName>
</protein>
<accession>Q9M7B7</accession>
<accession>Q5MD54</accession>
<feature type="chain" id="PRO_0000407323" description="Valine N-monooxygenase 2">
    <location>
        <begin position="1"/>
        <end position="541"/>
    </location>
</feature>
<feature type="topological domain" description="Cytoplasmic" evidence="10">
    <location>
        <begin position="1"/>
        <end position="18"/>
    </location>
</feature>
<feature type="transmembrane region" description="Helical" evidence="3">
    <location>
        <begin position="19"/>
        <end position="41"/>
    </location>
</feature>
<feature type="topological domain" description="Lumenal" evidence="10">
    <location>
        <begin position="42"/>
        <end position="541"/>
    </location>
</feature>
<feature type="binding site" description="axial binding residue" evidence="2">
    <location>
        <position position="477"/>
    </location>
    <ligand>
        <name>heme</name>
        <dbReference type="ChEBI" id="CHEBI:30413"/>
    </ligand>
    <ligandPart>
        <name>Fe</name>
        <dbReference type="ChEBI" id="CHEBI:18248"/>
    </ligandPart>
</feature>
<feature type="glycosylation site" description="N-linked (GlcNAc...) asparagine" evidence="4">
    <location>
        <position position="277"/>
    </location>
</feature>
<feature type="glycosylation site" description="N-linked (GlcNAc...) asparagine" evidence="4">
    <location>
        <position position="505"/>
    </location>
</feature>
<feature type="sequence conflict" description="In Ref. 2; AAV97888." evidence="10" ref="2">
    <original>R</original>
    <variation>K</variation>
    <location>
        <position position="508"/>
    </location>
</feature>
<feature type="sequence conflict" description="In Ref. 2; AAV97888." evidence="10" ref="2">
    <original>A</original>
    <variation>S</variation>
    <location>
        <position position="521"/>
    </location>
</feature>
<keyword id="KW-0256">Endoplasmic reticulum</keyword>
<keyword id="KW-0325">Glycoprotein</keyword>
<keyword id="KW-0349">Heme</keyword>
<keyword id="KW-0408">Iron</keyword>
<keyword id="KW-0472">Membrane</keyword>
<keyword id="KW-0479">Metal-binding</keyword>
<keyword id="KW-0492">Microsome</keyword>
<keyword id="KW-0503">Monooxygenase</keyword>
<keyword id="KW-0560">Oxidoreductase</keyword>
<keyword id="KW-0735">Signal-anchor</keyword>
<keyword id="KW-0812">Transmembrane</keyword>
<keyword id="KW-1133">Transmembrane helix</keyword>
<evidence type="ECO:0000250" key="1">
    <source>
        <dbReference type="UniProtKB" id="D5JBW8"/>
    </source>
</evidence>
<evidence type="ECO:0000250" key="2">
    <source>
        <dbReference type="UniProtKB" id="Q96242"/>
    </source>
</evidence>
<evidence type="ECO:0000255" key="3"/>
<evidence type="ECO:0000255" key="4">
    <source>
        <dbReference type="PROSITE-ProRule" id="PRU00498"/>
    </source>
</evidence>
<evidence type="ECO:0000269" key="5">
    <source>
    </source>
</evidence>
<evidence type="ECO:0000269" key="6">
    <source>
    </source>
</evidence>
<evidence type="ECO:0000269" key="7">
    <source>
    </source>
</evidence>
<evidence type="ECO:0000269" key="8">
    <source>
    </source>
</evidence>
<evidence type="ECO:0000303" key="9">
    <source>
    </source>
</evidence>
<evidence type="ECO:0000305" key="10"/>
<evidence type="ECO:0000305" key="11">
    <source>
    </source>
</evidence>
<organism>
    <name type="scientific">Manihot esculenta</name>
    <name type="common">Cassava</name>
    <name type="synonym">Jatropha manihot</name>
    <dbReference type="NCBI Taxonomy" id="3983"/>
    <lineage>
        <taxon>Eukaryota</taxon>
        <taxon>Viridiplantae</taxon>
        <taxon>Streptophyta</taxon>
        <taxon>Embryophyta</taxon>
        <taxon>Tracheophyta</taxon>
        <taxon>Spermatophyta</taxon>
        <taxon>Magnoliopsida</taxon>
        <taxon>eudicotyledons</taxon>
        <taxon>Gunneridae</taxon>
        <taxon>Pentapetalae</taxon>
        <taxon>rosids</taxon>
        <taxon>fabids</taxon>
        <taxon>Malpighiales</taxon>
        <taxon>Euphorbiaceae</taxon>
        <taxon>Crotonoideae</taxon>
        <taxon>Manihoteae</taxon>
        <taxon>Manihot</taxon>
    </lineage>
</organism>
<gene>
    <name evidence="9" type="primary">CYP79D2</name>
</gene>
<dbReference type="EC" id="1.14.14.38" evidence="5"/>
<dbReference type="EC" id="1.14.14.39" evidence="5"/>
<dbReference type="EMBL" id="AF140614">
    <property type="protein sequence ID" value="AAF27290.1"/>
    <property type="molecule type" value="mRNA"/>
</dbReference>
<dbReference type="EMBL" id="AY834390">
    <property type="protein sequence ID" value="AAV97888.1"/>
    <property type="molecule type" value="mRNA"/>
</dbReference>
<dbReference type="SMR" id="Q9M7B7"/>
<dbReference type="EnsemblPlants" id="Manes.12G133500.1.v8.1">
    <property type="protein sequence ID" value="Manes.12G133500.1.v8.1.CDS"/>
    <property type="gene ID" value="Manes.12G133500.v8.1"/>
</dbReference>
<dbReference type="Gramene" id="Manes.12G133500.1.v8.1">
    <property type="protein sequence ID" value="Manes.12G133500.1.v8.1.CDS"/>
    <property type="gene ID" value="Manes.12G133500.v8.1"/>
</dbReference>
<dbReference type="KEGG" id="ag:AAF27290"/>
<dbReference type="KEGG" id="ag:AAV97888"/>
<dbReference type="OMA" id="YTKACVR"/>
<dbReference type="OrthoDB" id="2789670at2759"/>
<dbReference type="BRENDA" id="1.14.14.38">
    <property type="organism ID" value="3175"/>
</dbReference>
<dbReference type="BRENDA" id="1.14.14.39">
    <property type="organism ID" value="3175"/>
</dbReference>
<dbReference type="GO" id="GO:0005783">
    <property type="term" value="C:endoplasmic reticulum"/>
    <property type="evidence" value="ECO:0007669"/>
    <property type="project" value="UniProtKB-KW"/>
</dbReference>
<dbReference type="GO" id="GO:0016020">
    <property type="term" value="C:membrane"/>
    <property type="evidence" value="ECO:0007669"/>
    <property type="project" value="UniProtKB-KW"/>
</dbReference>
<dbReference type="GO" id="GO:0020037">
    <property type="term" value="F:heme binding"/>
    <property type="evidence" value="ECO:0007669"/>
    <property type="project" value="InterPro"/>
</dbReference>
<dbReference type="GO" id="GO:0005506">
    <property type="term" value="F:iron ion binding"/>
    <property type="evidence" value="ECO:0007669"/>
    <property type="project" value="InterPro"/>
</dbReference>
<dbReference type="GO" id="GO:0102001">
    <property type="term" value="F:isoleucine N-monooxygenase (oxime forming) activity"/>
    <property type="evidence" value="ECO:0007669"/>
    <property type="project" value="RHEA"/>
</dbReference>
<dbReference type="GO" id="GO:0004497">
    <property type="term" value="F:monooxygenase activity"/>
    <property type="evidence" value="ECO:0000314"/>
    <property type="project" value="UniProtKB"/>
</dbReference>
<dbReference type="GO" id="GO:0102002">
    <property type="term" value="F:valine N-monooxygenase (oxime forming) activity"/>
    <property type="evidence" value="ECO:0007669"/>
    <property type="project" value="UniProtKB-EC"/>
</dbReference>
<dbReference type="GO" id="GO:0019756">
    <property type="term" value="P:cyanogenic glycoside biosynthetic process"/>
    <property type="evidence" value="ECO:0000314"/>
    <property type="project" value="UniProtKB"/>
</dbReference>
<dbReference type="CDD" id="cd20658">
    <property type="entry name" value="CYP79"/>
    <property type="match status" value="1"/>
</dbReference>
<dbReference type="FunFam" id="1.10.630.10:FF:000037">
    <property type="entry name" value="Cytochrome P450 9"/>
    <property type="match status" value="1"/>
</dbReference>
<dbReference type="Gene3D" id="1.10.630.10">
    <property type="entry name" value="Cytochrome P450"/>
    <property type="match status" value="1"/>
</dbReference>
<dbReference type="InterPro" id="IPR001128">
    <property type="entry name" value="Cyt_P450"/>
</dbReference>
<dbReference type="InterPro" id="IPR017972">
    <property type="entry name" value="Cyt_P450_CS"/>
</dbReference>
<dbReference type="InterPro" id="IPR002401">
    <property type="entry name" value="Cyt_P450_E_grp-I"/>
</dbReference>
<dbReference type="InterPro" id="IPR036396">
    <property type="entry name" value="Cyt_P450_sf"/>
</dbReference>
<dbReference type="PANTHER" id="PTHR47944:SF19">
    <property type="entry name" value="CYTOCHROME P450 77A4"/>
    <property type="match status" value="1"/>
</dbReference>
<dbReference type="PANTHER" id="PTHR47944">
    <property type="entry name" value="CYTOCHROME P450 98A9"/>
    <property type="match status" value="1"/>
</dbReference>
<dbReference type="Pfam" id="PF00067">
    <property type="entry name" value="p450"/>
    <property type="match status" value="1"/>
</dbReference>
<dbReference type="PRINTS" id="PR00463">
    <property type="entry name" value="EP450I"/>
</dbReference>
<dbReference type="SUPFAM" id="SSF48264">
    <property type="entry name" value="Cytochrome P450"/>
    <property type="match status" value="1"/>
</dbReference>
<dbReference type="PROSITE" id="PS00086">
    <property type="entry name" value="CYTOCHROME_P450"/>
    <property type="match status" value="1"/>
</dbReference>
<comment type="function">
    <text evidence="5 6 7">Involved in the biosynthesis of the cyanogenic glucosides linamarin and lotaustralin (PubMed:10636899, PubMed:15122013, PubMed:15630626). Can use L-valine or L-isoleucine as substrate (PubMed:10636899, PubMed:15122013, PubMed:15630626). Catalyzes multi-step reactions starting with two successive N-hydroxylations using L-valine and L-isoleucine as substrates leading to the formation of N,N-dihydroxy-L-valine and N,N-dihydroxy-L-isoleucine, respectively; following spontaneous reactions lead to the production of (E)-2-methylpropanal oxime and (1E,2S)-2-methylbutanal oxime, respectively (PubMed:10636899).</text>
</comment>
<comment type="catalytic activity">
    <reaction evidence="5">
        <text>L-valine + 2 reduced [NADPH--hemoprotein reductase] + 2 O2 = (E)-2-methylpropanal oxime + 2 oxidized [NADPH--hemoprotein reductase] + CO2 + 3 H2O + 2 H(+)</text>
        <dbReference type="Rhea" id="RHEA:28606"/>
        <dbReference type="Rhea" id="RHEA-COMP:11964"/>
        <dbReference type="Rhea" id="RHEA-COMP:11965"/>
        <dbReference type="ChEBI" id="CHEBI:15377"/>
        <dbReference type="ChEBI" id="CHEBI:15378"/>
        <dbReference type="ChEBI" id="CHEBI:15379"/>
        <dbReference type="ChEBI" id="CHEBI:16526"/>
        <dbReference type="ChEBI" id="CHEBI:57618"/>
        <dbReference type="ChEBI" id="CHEBI:57762"/>
        <dbReference type="ChEBI" id="CHEBI:58210"/>
        <dbReference type="ChEBI" id="CHEBI:61143"/>
        <dbReference type="EC" id="1.14.14.38"/>
    </reaction>
</comment>
<comment type="catalytic activity">
    <reaction evidence="11">
        <text>L-valine + reduced [NADPH--hemoprotein reductase] + O2 = N-hydroxy-L-valine + oxidized [NADPH--hemoprotein reductase] + H2O + 2 H(+)</text>
        <dbReference type="Rhea" id="RHEA:30491"/>
        <dbReference type="Rhea" id="RHEA-COMP:11964"/>
        <dbReference type="Rhea" id="RHEA-COMP:11965"/>
        <dbReference type="ChEBI" id="CHEBI:15377"/>
        <dbReference type="ChEBI" id="CHEBI:15378"/>
        <dbReference type="ChEBI" id="CHEBI:15379"/>
        <dbReference type="ChEBI" id="CHEBI:57618"/>
        <dbReference type="ChEBI" id="CHEBI:57762"/>
        <dbReference type="ChEBI" id="CHEBI:58210"/>
        <dbReference type="ChEBI" id="CHEBI:61140"/>
    </reaction>
</comment>
<comment type="catalytic activity">
    <reaction evidence="11">
        <text>N-hydroxy-L-valine + reduced [NADPH--hemoprotein reductase] + O2 = N,N-dihydroxy-L-valine + oxidized [NADPH--hemoprotein reductase] + H2O + H(+)</text>
        <dbReference type="Rhea" id="RHEA:30495"/>
        <dbReference type="Rhea" id="RHEA-COMP:11964"/>
        <dbReference type="Rhea" id="RHEA-COMP:11965"/>
        <dbReference type="ChEBI" id="CHEBI:15377"/>
        <dbReference type="ChEBI" id="CHEBI:15378"/>
        <dbReference type="ChEBI" id="CHEBI:15379"/>
        <dbReference type="ChEBI" id="CHEBI:57618"/>
        <dbReference type="ChEBI" id="CHEBI:58210"/>
        <dbReference type="ChEBI" id="CHEBI:61140"/>
        <dbReference type="ChEBI" id="CHEBI:61142"/>
    </reaction>
</comment>
<comment type="catalytic activity">
    <reaction evidence="5">
        <text>L-isoleucine + 2 reduced [NADPH--hemoprotein reductase] + 2 O2 = (1E,2S)-2-methylbutanal oxime + 2 oxidized [NADPH--hemoprotein reductase] + CO2 + 3 H2O + 2 H(+)</text>
        <dbReference type="Rhea" id="RHEA:28602"/>
        <dbReference type="Rhea" id="RHEA-COMP:11964"/>
        <dbReference type="Rhea" id="RHEA-COMP:11965"/>
        <dbReference type="ChEBI" id="CHEBI:15377"/>
        <dbReference type="ChEBI" id="CHEBI:15378"/>
        <dbReference type="ChEBI" id="CHEBI:15379"/>
        <dbReference type="ChEBI" id="CHEBI:16526"/>
        <dbReference type="ChEBI" id="CHEBI:57618"/>
        <dbReference type="ChEBI" id="CHEBI:58045"/>
        <dbReference type="ChEBI" id="CHEBI:58210"/>
        <dbReference type="ChEBI" id="CHEBI:134628"/>
        <dbReference type="EC" id="1.14.14.39"/>
    </reaction>
</comment>
<comment type="catalytic activity">
    <reaction evidence="11">
        <text>L-isoleucine + reduced [NADPH--hemoprotein reductase] + O2 = N-hydroxy-L-isoleucine + oxidized [NADPH--hemoprotein reductase] + H2O + 2 H(+)</text>
        <dbReference type="Rhea" id="RHEA:30479"/>
        <dbReference type="Rhea" id="RHEA-COMP:11964"/>
        <dbReference type="Rhea" id="RHEA-COMP:11965"/>
        <dbReference type="ChEBI" id="CHEBI:15377"/>
        <dbReference type="ChEBI" id="CHEBI:15378"/>
        <dbReference type="ChEBI" id="CHEBI:15379"/>
        <dbReference type="ChEBI" id="CHEBI:57618"/>
        <dbReference type="ChEBI" id="CHEBI:58045"/>
        <dbReference type="ChEBI" id="CHEBI:58210"/>
        <dbReference type="ChEBI" id="CHEBI:61131"/>
    </reaction>
</comment>
<comment type="catalytic activity">
    <reaction evidence="11">
        <text>N-hydroxy-L-isoleucine + reduced [NADPH--hemoprotein reductase] + O2 = N,N-dihydroxy-L-isoleucine + oxidized [NADPH--hemoprotein reductase] + H2O + H(+)</text>
        <dbReference type="Rhea" id="RHEA:30483"/>
        <dbReference type="Rhea" id="RHEA-COMP:11964"/>
        <dbReference type="Rhea" id="RHEA-COMP:11965"/>
        <dbReference type="ChEBI" id="CHEBI:15377"/>
        <dbReference type="ChEBI" id="CHEBI:15378"/>
        <dbReference type="ChEBI" id="CHEBI:15379"/>
        <dbReference type="ChEBI" id="CHEBI:57618"/>
        <dbReference type="ChEBI" id="CHEBI:58210"/>
        <dbReference type="ChEBI" id="CHEBI:61131"/>
        <dbReference type="ChEBI" id="CHEBI:61133"/>
    </reaction>
</comment>
<comment type="cofactor">
    <cofactor evidence="2">
        <name>heme</name>
        <dbReference type="ChEBI" id="CHEBI:30413"/>
    </cofactor>
</comment>
<comment type="subcellular location">
    <subcellularLocation>
        <location evidence="1">Microsome membrane</location>
        <topology evidence="3">Single-pass type II membrane protein</topology>
    </subcellularLocation>
</comment>
<comment type="tissue specificity">
    <text evidence="8">Expressed in the epidermis, the next two cortex cell layers, the endodermis and the pericycle of leaf petioles. Strong expression around the laticifers among the phloem cells and in parenchymatic cells between the protoxylem and the metaxylem cells. In the leaves, preferentially expressed in the mesophyll cells adjacent to the epidermis.</text>
</comment>
<comment type="miscellaneous">
    <text>The synthesis of cyanogenic glucosides is mainly in the top of the plant and then cyanogenic glucosides are transported basipetal in the plant to the tuber.</text>
</comment>
<comment type="similarity">
    <text evidence="10">Belongs to the cytochrome P450 family.</text>
</comment>